<accession>P0DOG8</accession>
<comment type="function">
    <text evidence="5 6 7 8 9">Plays a role in viral particle release. Presumably acts by facilitating the fission of the virion bud at the cell surface (PubMed:17267509, PubMed:22828015). May prevent the antiviral activity of murine APOBEC3 (PubMed:20702647, PubMed:23671100, PubMed:25505062).</text>
</comment>
<comment type="subcellular location">
    <subcellularLocation>
        <location evidence="1 5 11">Host cell membrane</location>
        <topology evidence="11">Single-pass membrane protein</topology>
    </subcellularLocation>
</comment>
<comment type="alternative products">
    <event type="alternative initiation"/>
    <isoform>
        <id>P0DOG8-1</id>
        <name>Glyco-Gag protein</name>
        <sequence type="displayed"/>
    </isoform>
    <isoform>
        <id>P03336-1</id>
        <name>Gag polyprotein</name>
        <sequence type="external"/>
    </isoform>
</comment>
<comment type="PTM">
    <text evidence="10">Glycosylated by host (PubMed:6997511).</text>
</comment>
<comment type="PTM">
    <text evidence="11">Cleaved by host near the middle of the molecule, releasing the c-terminal half containing capsid and nucleoprotein domains op GAG (PubMed:9188605).</text>
</comment>
<comment type="caution">
    <text evidence="4">The protein uses an unusual AUG start codon with leucine.</text>
</comment>
<feature type="chain" id="PRO_0000441131" description="Glyco-Gag protein">
    <location>
        <begin position="1"/>
        <end position="625"/>
    </location>
</feature>
<feature type="topological domain" description="Cytoplasmic" evidence="12">
    <location>
        <begin position="1"/>
        <end position="66"/>
    </location>
</feature>
<feature type="transmembrane region" description="Helical" evidence="1">
    <location>
        <begin position="67"/>
        <end position="86"/>
    </location>
</feature>
<feature type="topological domain" description="Extracellular" evidence="12">
    <location>
        <begin position="87"/>
        <end position="625"/>
    </location>
</feature>
<feature type="region of interest" description="Disordered" evidence="3">
    <location>
        <begin position="195"/>
        <end position="305"/>
    </location>
</feature>
<feature type="region of interest" description="Disordered" evidence="3">
    <location>
        <begin position="522"/>
        <end position="625"/>
    </location>
</feature>
<feature type="compositionally biased region" description="Basic and acidic residues" evidence="3">
    <location>
        <begin position="522"/>
        <end position="553"/>
    </location>
</feature>
<feature type="compositionally biased region" description="Basic and acidic residues" evidence="3">
    <location>
        <begin position="573"/>
        <end position="606"/>
    </location>
</feature>
<feature type="glycosylation site" description="N-linked (GlcNAc...) asparagine; by host" evidence="2">
    <location>
        <position position="113"/>
    </location>
</feature>
<feature type="glycosylation site" description="N-linked (GlcNAc...) asparagine; by host" evidence="2">
    <location>
        <position position="479"/>
    </location>
</feature>
<dbReference type="EMBL" id="J01998">
    <property type="status" value="NOT_ANNOTATED_CDS"/>
    <property type="molecule type" value="Genomic_RNA"/>
</dbReference>
<dbReference type="SMR" id="P0DOG8"/>
<dbReference type="Proteomes" id="UP000008875">
    <property type="component" value="Genome"/>
</dbReference>
<dbReference type="GO" id="GO:0020002">
    <property type="term" value="C:host cell plasma membrane"/>
    <property type="evidence" value="ECO:0007669"/>
    <property type="project" value="UniProtKB-SubCell"/>
</dbReference>
<dbReference type="GO" id="GO:0016020">
    <property type="term" value="C:membrane"/>
    <property type="evidence" value="ECO:0007669"/>
    <property type="project" value="UniProtKB-KW"/>
</dbReference>
<dbReference type="GO" id="GO:0003676">
    <property type="term" value="F:nucleic acid binding"/>
    <property type="evidence" value="ECO:0007669"/>
    <property type="project" value="InterPro"/>
</dbReference>
<dbReference type="GO" id="GO:0008270">
    <property type="term" value="F:zinc ion binding"/>
    <property type="evidence" value="ECO:0007669"/>
    <property type="project" value="InterPro"/>
</dbReference>
<dbReference type="GO" id="GO:0019068">
    <property type="term" value="P:virion assembly"/>
    <property type="evidence" value="ECO:0007669"/>
    <property type="project" value="InterPro"/>
</dbReference>
<dbReference type="FunFam" id="1.10.375.10:FF:000008">
    <property type="entry name" value="Gag polyprotein"/>
    <property type="match status" value="1"/>
</dbReference>
<dbReference type="Gene3D" id="1.10.150.180">
    <property type="entry name" value="Gamma-retroviral matrix domain"/>
    <property type="match status" value="1"/>
</dbReference>
<dbReference type="Gene3D" id="1.10.375.10">
    <property type="entry name" value="Human Immunodeficiency Virus Type 1 Capsid Protein"/>
    <property type="match status" value="1"/>
</dbReference>
<dbReference type="Gene3D" id="4.10.60.10">
    <property type="entry name" value="Zinc finger, CCHC-type"/>
    <property type="match status" value="1"/>
</dbReference>
<dbReference type="InterPro" id="IPR000840">
    <property type="entry name" value="G_retro_matrix"/>
</dbReference>
<dbReference type="InterPro" id="IPR036946">
    <property type="entry name" value="G_retro_matrix_sf"/>
</dbReference>
<dbReference type="InterPro" id="IPR002079">
    <property type="entry name" value="Gag_p12"/>
</dbReference>
<dbReference type="InterPro" id="IPR003036">
    <property type="entry name" value="Gag_P30"/>
</dbReference>
<dbReference type="InterPro" id="IPR008919">
    <property type="entry name" value="Retrov_capsid_N"/>
</dbReference>
<dbReference type="InterPro" id="IPR050462">
    <property type="entry name" value="Retroviral_Gag-Pol_poly"/>
</dbReference>
<dbReference type="InterPro" id="IPR010999">
    <property type="entry name" value="Retrovr_matrix"/>
</dbReference>
<dbReference type="InterPro" id="IPR001878">
    <property type="entry name" value="Znf_CCHC"/>
</dbReference>
<dbReference type="InterPro" id="IPR036875">
    <property type="entry name" value="Znf_CCHC_sf"/>
</dbReference>
<dbReference type="PANTHER" id="PTHR33166">
    <property type="entry name" value="GAG_P30 DOMAIN-CONTAINING PROTEIN"/>
    <property type="match status" value="1"/>
</dbReference>
<dbReference type="Pfam" id="PF01140">
    <property type="entry name" value="Gag_MA"/>
    <property type="match status" value="1"/>
</dbReference>
<dbReference type="Pfam" id="PF01141">
    <property type="entry name" value="Gag_p12"/>
    <property type="match status" value="1"/>
</dbReference>
<dbReference type="Pfam" id="PF02093">
    <property type="entry name" value="Gag_p30"/>
    <property type="match status" value="1"/>
</dbReference>
<dbReference type="Pfam" id="PF00098">
    <property type="entry name" value="zf-CCHC"/>
    <property type="match status" value="1"/>
</dbReference>
<dbReference type="SMART" id="SM00343">
    <property type="entry name" value="ZnF_C2HC"/>
    <property type="match status" value="1"/>
</dbReference>
<dbReference type="SUPFAM" id="SSF47836">
    <property type="entry name" value="Retroviral matrix proteins"/>
    <property type="match status" value="1"/>
</dbReference>
<dbReference type="SUPFAM" id="SSF47943">
    <property type="entry name" value="Retrovirus capsid protein, N-terminal core domain"/>
    <property type="match status" value="1"/>
</dbReference>
<dbReference type="SUPFAM" id="SSF57756">
    <property type="entry name" value="Retrovirus zinc finger-like domains"/>
    <property type="match status" value="1"/>
</dbReference>
<dbReference type="PROSITE" id="PS50158">
    <property type="entry name" value="ZF_CCHC"/>
    <property type="match status" value="1"/>
</dbReference>
<proteinExistence type="evidence at protein level"/>
<organism>
    <name type="scientific">AKV murine leukemia virus</name>
    <name type="common">AKR (endogenous) murine leukemia virus</name>
    <dbReference type="NCBI Taxonomy" id="11791"/>
    <lineage>
        <taxon>Viruses</taxon>
        <taxon>Riboviria</taxon>
        <taxon>Pararnavirae</taxon>
        <taxon>Artverviricota</taxon>
        <taxon>Revtraviricetes</taxon>
        <taxon>Ortervirales</taxon>
        <taxon>Retroviridae</taxon>
        <taxon>Orthoretrovirinae</taxon>
        <taxon>Gammaretrovirus</taxon>
        <taxon>Murine leukemia virus</taxon>
    </lineage>
</organism>
<keyword id="KW-0024">Alternative initiation</keyword>
<keyword id="KW-0325">Glycoprotein</keyword>
<keyword id="KW-1032">Host cell membrane</keyword>
<keyword id="KW-1043">Host membrane</keyword>
<keyword id="KW-0472">Membrane</keyword>
<keyword id="KW-0812">Transmembrane</keyword>
<keyword id="KW-1133">Transmembrane helix</keyword>
<protein>
    <recommendedName>
        <fullName>Glyco-Gag protein</fullName>
    </recommendedName>
    <alternativeName>
        <fullName>Gross cell surface antigen</fullName>
    </alternativeName>
    <alternativeName>
        <fullName>glycosylated Pr80 gag</fullName>
        <shortName>gPr80 Gag</shortName>
        <shortName>gag-gPr80</shortName>
    </alternativeName>
</protein>
<name>GGAG_MLVAV</name>
<evidence type="ECO:0000255" key="1"/>
<evidence type="ECO:0000255" key="2">
    <source>
        <dbReference type="PROSITE-ProRule" id="PRU00498"/>
    </source>
</evidence>
<evidence type="ECO:0000256" key="3">
    <source>
        <dbReference type="SAM" id="MobiDB-lite"/>
    </source>
</evidence>
<evidence type="ECO:0000269" key="4">
    <source>
    </source>
</evidence>
<evidence type="ECO:0000269" key="5">
    <source>
    </source>
</evidence>
<evidence type="ECO:0000269" key="6">
    <source>
    </source>
</evidence>
<evidence type="ECO:0000269" key="7">
    <source>
    </source>
</evidence>
<evidence type="ECO:0000269" key="8">
    <source>
    </source>
</evidence>
<evidence type="ECO:0000269" key="9">
    <source>
    </source>
</evidence>
<evidence type="ECO:0000269" key="10">
    <source>
    </source>
</evidence>
<evidence type="ECO:0000269" key="11">
    <source>
    </source>
</evidence>
<evidence type="ECO:0000305" key="12">
    <source>
    </source>
</evidence>
<sequence>LGDVSEASGARWVAQSVSPSPDRFGLFGAPPLSEGYVVLLGDERSKPSPPPSEFLLSVFRRNRAARLVCLSIVLSFVCSLLFWTASKNMGQTVTTPLSLTLEHWEDVQRIASNQSVDVKKRRWVTFCSAEWPTFGVGWPQDGTFNLDIILQVKSKVFSPGPHGHPDQVPYIVTWEAIAYEPPPWVKPFVSPKLSPSPTAPILPSGPSTQPPPRSALYPALTPSIKPRPSKPQVLSDNGGPLIDLLSEDPPPYGGQGLSSSDGDGDREEATSTSEIPAPSPIVSRLRGKRDPPAADSTTSRAFPLRLGGNGQLQYWPFSSSDLYNWKNNNPSFSEDPGKLTALIESVLTTHQPTWDDCQQLLGTLLTGEEKQRVLLEARKAVRGNDGRPTQLPNEVDAAFPLERPDWDYTTQRGRNHLVLYRQLLLAGLQNAGRSPTNLAKVKGITQGPNESPSAFLERLKEAYRRYTPYDPEDPGQETNVSMSFIWQSAPDIGRKLERLEDLKSKTLGDLVREAERIFNKRETPEEREERVRRETEEKEERRRAEEEQKEKERDRRRHREMSKLLATVVSGQRQDRQGGERRRPQLDKDQCAYCKEKGHWAKDCPKKPRGPRGPRPQTSLLTLDD</sequence>
<organismHost>
    <name type="scientific">Mus musculus</name>
    <name type="common">Mouse</name>
    <dbReference type="NCBI Taxonomy" id="10090"/>
</organismHost>
<reference key="1">
    <citation type="journal article" date="1984" name="J. Virol.">
        <title>Nucleotide sequence of AKV murine leukemia virus.</title>
        <authorList>
            <person name="Herr W."/>
        </authorList>
    </citation>
    <scope>NUCLEOTIDE SEQUENCE [GENOMIC RNA]</scope>
</reference>
<reference key="2">
    <citation type="journal article" date="1980" name="J. Virol.">
        <title>Sequence relationship of glycosylated and unglycosylated gag polyproteins of Moloney murine leukemia virus.</title>
        <authorList>
            <person name="Edwards S.A."/>
            <person name="Fan H."/>
        </authorList>
    </citation>
    <scope>GLYCOSYLATION</scope>
</reference>
<reference key="3">
    <citation type="journal article" date="1989" name="J. Mol. Biol.">
        <title>CUG initiation codon used for the synthesis of a cell surface antigen coded by the murine leukemia virus.</title>
        <authorList>
            <person name="Prats A.C."/>
            <person name="De Billy G."/>
            <person name="Wang P."/>
            <person name="Darlix J.L."/>
        </authorList>
    </citation>
    <scope>ALTERNATIVE INITIATION</scope>
</reference>
<reference key="4">
    <citation type="journal article" date="1997" name="J. Virol.">
        <title>Characterization of glycosylated Gag expressed by a neurovirulent murine leukemia virus: identification of differences in processing in vitro and in vivo.</title>
        <authorList>
            <person name="Fujisawa R."/>
            <person name="McAtee F.J."/>
            <person name="Zirbel J.H."/>
            <person name="Portis J.L."/>
        </authorList>
    </citation>
    <scope>CLEAVAGE BY HOST</scope>
    <scope>SUBCELLULAR LOCATION</scope>
</reference>
<reference key="5">
    <citation type="journal article" date="2004" name="PLoS Biol.">
        <title>Unanticipated antigens: translation initiation at CUG with leucine.</title>
        <authorList>
            <person name="Schwab S.R."/>
            <person name="Shugart J.A."/>
            <person name="Horng T."/>
            <person name="Malarkannan S."/>
            <person name="Shastri N."/>
        </authorList>
    </citation>
    <scope>INITIATION WITH LEUCINE</scope>
</reference>
<reference key="6">
    <citation type="journal article" date="2007" name="J. Virol.">
        <title>Mutation in the glycosylated gag protein of murine leukemia virus results in reduced in vivo infectivity and a novel defect in viral budding or release.</title>
        <authorList>
            <person name="Low A."/>
            <person name="Datta S."/>
            <person name="Kuznetsov Y."/>
            <person name="Jahid S."/>
            <person name="Kothari N."/>
            <person name="McPherson A."/>
            <person name="Fan H."/>
        </authorList>
    </citation>
    <scope>FUNCTION</scope>
</reference>
<reference key="7">
    <citation type="journal article" date="2010" name="J. Virol.">
        <title>The glycosylated Gag protein of a murine leukemia virus inhibits the antiretroviral function of APOBEC3.</title>
        <authorList>
            <person name="Kolokithas A."/>
            <person name="Rosenke K."/>
            <person name="Malik F."/>
            <person name="Hendrick D."/>
            <person name="Swanson L."/>
            <person name="Santiago M.L."/>
            <person name="Portis J.L."/>
            <person name="Hasenkrug K.J."/>
            <person name="Evans L.H."/>
        </authorList>
    </citation>
    <scope>FUNCTION</scope>
</reference>
<reference key="8">
    <citation type="journal article" date="2012" name="Retrovirology">
        <title>Moloney murine leukemia virus glyco-gag facilitates xenotropic murine leukemia virus-related virus replication through human APOBEC3-independent mechanisms.</title>
        <authorList>
            <person name="Nitta T."/>
            <person name="Lee S."/>
            <person name="Ha D."/>
            <person name="Arias M."/>
            <person name="Kozak C.A."/>
            <person name="Fan H."/>
        </authorList>
    </citation>
    <scope>FUNCTION</scope>
</reference>
<reference key="9">
    <citation type="journal article" date="2013" name="Proc. Natl. Acad. Sci. U.S.A.">
        <title>Murine leukemia virus glycosylated Gag blocks apolipoprotein B editing complex 3 and cytosolic sensor access to the reverse transcription complex.</title>
        <authorList>
            <person name="Stavrou S."/>
            <person name="Nitta T."/>
            <person name="Kotla S."/>
            <person name="Ha D."/>
            <person name="Nagashima K."/>
            <person name="Rein A.R."/>
            <person name="Fan H."/>
            <person name="Ross S.R."/>
        </authorList>
    </citation>
    <scope>FUNCTION</scope>
</reference>
<reference key="10">
    <citation type="journal article" date="2015" name="J. Virol.">
        <title>N-linked glycosylation protects gammaretroviruses against deamination by APOBEC3 proteins.</title>
        <authorList>
            <person name="Rosales Gerpe M.C."/>
            <person name="Renner T.M."/>
            <person name="Belanger K."/>
            <person name="Lam C."/>
            <person name="Aydin H."/>
            <person name="Langlois M.A."/>
        </authorList>
    </citation>
    <scope>FUNCTION</scope>
</reference>